<organism>
    <name type="scientific">Streptomyces coelicolor (strain ATCC BAA-471 / A3(2) / M145)</name>
    <dbReference type="NCBI Taxonomy" id="100226"/>
    <lineage>
        <taxon>Bacteria</taxon>
        <taxon>Bacillati</taxon>
        <taxon>Actinomycetota</taxon>
        <taxon>Actinomycetes</taxon>
        <taxon>Kitasatosporales</taxon>
        <taxon>Streptomycetaceae</taxon>
        <taxon>Streptomyces</taxon>
        <taxon>Streptomyces albidoflavus group</taxon>
    </lineage>
</organism>
<proteinExistence type="inferred from homology"/>
<reference key="1">
    <citation type="journal article" date="2002" name="Nature">
        <title>Complete genome sequence of the model actinomycete Streptomyces coelicolor A3(2).</title>
        <authorList>
            <person name="Bentley S.D."/>
            <person name="Chater K.F."/>
            <person name="Cerdeno-Tarraga A.-M."/>
            <person name="Challis G.L."/>
            <person name="Thomson N.R."/>
            <person name="James K.D."/>
            <person name="Harris D.E."/>
            <person name="Quail M.A."/>
            <person name="Kieser H."/>
            <person name="Harper D."/>
            <person name="Bateman A."/>
            <person name="Brown S."/>
            <person name="Chandra G."/>
            <person name="Chen C.W."/>
            <person name="Collins M."/>
            <person name="Cronin A."/>
            <person name="Fraser A."/>
            <person name="Goble A."/>
            <person name="Hidalgo J."/>
            <person name="Hornsby T."/>
            <person name="Howarth S."/>
            <person name="Huang C.-H."/>
            <person name="Kieser T."/>
            <person name="Larke L."/>
            <person name="Murphy L.D."/>
            <person name="Oliver K."/>
            <person name="O'Neil S."/>
            <person name="Rabbinowitsch E."/>
            <person name="Rajandream M.A."/>
            <person name="Rutherford K.M."/>
            <person name="Rutter S."/>
            <person name="Seeger K."/>
            <person name="Saunders D."/>
            <person name="Sharp S."/>
            <person name="Squares R."/>
            <person name="Squares S."/>
            <person name="Taylor K."/>
            <person name="Warren T."/>
            <person name="Wietzorrek A."/>
            <person name="Woodward J.R."/>
            <person name="Barrell B.G."/>
            <person name="Parkhill J."/>
            <person name="Hopwood D.A."/>
        </authorList>
    </citation>
    <scope>NUCLEOTIDE SEQUENCE [LARGE SCALE GENOMIC DNA]</scope>
    <source>
        <strain>ATCC BAA-471 / A3(2) / M145</strain>
    </source>
</reference>
<keyword id="KW-0342">GTP-binding</keyword>
<keyword id="KW-0547">Nucleotide-binding</keyword>
<keyword id="KW-0548">Nucleotidyltransferase</keyword>
<keyword id="KW-1185">Reference proteome</keyword>
<keyword id="KW-0808">Transferase</keyword>
<sequence length="212" mass="21151">MQWTLVVPVKALARAKSRLSDTADDGLRPGLALAFAQDTVAAALACPAVADVAVVTDDARAGRELAALGAGVVADEPGGGLNAALAHGAAVVRAARPESPVAALNADLPALRPAELARVLAAATQFPRAFLPDAAGIGTTLLTVAPGQELAPAFGADSRARHRASGAVELRLDAVDSVRQDVDTGGDLRSALALGVGPRTAAVAARLLIAGQ</sequence>
<feature type="chain" id="PRO_0000398716" description="Phosphoenolpyruvate guanylyltransferase">
    <location>
        <begin position="1"/>
        <end position="212"/>
    </location>
</feature>
<feature type="binding site" evidence="1">
    <location>
        <position position="139"/>
    </location>
    <ligand>
        <name>phosphoenolpyruvate</name>
        <dbReference type="ChEBI" id="CHEBI:58702"/>
    </ligand>
</feature>
<feature type="binding site" evidence="1">
    <location>
        <position position="155"/>
    </location>
    <ligand>
        <name>phosphoenolpyruvate</name>
        <dbReference type="ChEBI" id="CHEBI:58702"/>
    </ligand>
</feature>
<feature type="binding site" evidence="1">
    <location>
        <position position="158"/>
    </location>
    <ligand>
        <name>phosphoenolpyruvate</name>
        <dbReference type="ChEBI" id="CHEBI:58702"/>
    </ligand>
</feature>
<evidence type="ECO:0000255" key="1">
    <source>
        <dbReference type="HAMAP-Rule" id="MF_02114"/>
    </source>
</evidence>
<comment type="function">
    <text evidence="1">Guanylyltransferase that catalyzes the activation of phosphoenolpyruvate (PEP) as enolpyruvoyl-2-diphospho-5'-guanosine, via the condensation of PEP with GTP. It is involved in the biosynthesis of coenzyme F420, a hydride carrier cofactor.</text>
</comment>
<comment type="catalytic activity">
    <reaction evidence="1">
        <text>phosphoenolpyruvate + GTP + H(+) = enolpyruvoyl-2-diphospho-5'-guanosine + diphosphate</text>
        <dbReference type="Rhea" id="RHEA:30519"/>
        <dbReference type="ChEBI" id="CHEBI:15378"/>
        <dbReference type="ChEBI" id="CHEBI:33019"/>
        <dbReference type="ChEBI" id="CHEBI:37565"/>
        <dbReference type="ChEBI" id="CHEBI:58702"/>
        <dbReference type="ChEBI" id="CHEBI:143701"/>
        <dbReference type="EC" id="2.7.7.105"/>
    </reaction>
</comment>
<comment type="pathway">
    <text evidence="1">Cofactor biosynthesis; coenzyme F420 biosynthesis.</text>
</comment>
<comment type="similarity">
    <text evidence="1">Belongs to the CofC family.</text>
</comment>
<dbReference type="EC" id="2.7.7.105" evidence="1"/>
<dbReference type="EMBL" id="AL939124">
    <property type="protein sequence ID" value="CAA22400.1"/>
    <property type="molecule type" value="Genomic_DNA"/>
</dbReference>
<dbReference type="PIR" id="T35641">
    <property type="entry name" value="T35641"/>
</dbReference>
<dbReference type="RefSeq" id="NP_629692.1">
    <property type="nucleotide sequence ID" value="NC_003888.3"/>
</dbReference>
<dbReference type="SMR" id="Q9ZBS2"/>
<dbReference type="FunCoup" id="Q9ZBS2">
    <property type="interactions" value="114"/>
</dbReference>
<dbReference type="STRING" id="100226.gene:17763215"/>
<dbReference type="PaxDb" id="100226-SCO5557a"/>
<dbReference type="KEGG" id="sco:SCO5557a"/>
<dbReference type="PATRIC" id="fig|100226.15.peg.5646"/>
<dbReference type="eggNOG" id="COG1920">
    <property type="taxonomic scope" value="Bacteria"/>
</dbReference>
<dbReference type="HOGENOM" id="CLU_076569_0_0_11"/>
<dbReference type="InParanoid" id="Q9ZBS2"/>
<dbReference type="OrthoDB" id="9151145at2"/>
<dbReference type="UniPathway" id="UPA00071"/>
<dbReference type="Proteomes" id="UP000001973">
    <property type="component" value="Chromosome"/>
</dbReference>
<dbReference type="GO" id="GO:0005525">
    <property type="term" value="F:GTP binding"/>
    <property type="evidence" value="ECO:0007669"/>
    <property type="project" value="UniProtKB-KW"/>
</dbReference>
<dbReference type="GO" id="GO:0043814">
    <property type="term" value="F:phospholactate guanylyltransferase activity"/>
    <property type="evidence" value="ECO:0007669"/>
    <property type="project" value="InterPro"/>
</dbReference>
<dbReference type="GO" id="GO:0052645">
    <property type="term" value="P:F420-0 metabolic process"/>
    <property type="evidence" value="ECO:0007669"/>
    <property type="project" value="UniProtKB-UniRule"/>
</dbReference>
<dbReference type="FunFam" id="3.90.550.10:FF:000310">
    <property type="entry name" value="2-phospho-L-lactate guanylyltransferase"/>
    <property type="match status" value="1"/>
</dbReference>
<dbReference type="Gene3D" id="3.90.550.10">
    <property type="entry name" value="Spore Coat Polysaccharide Biosynthesis Protein SpsA, Chain A"/>
    <property type="match status" value="1"/>
</dbReference>
<dbReference type="HAMAP" id="MF_02114">
    <property type="entry name" value="CofC"/>
    <property type="match status" value="1"/>
</dbReference>
<dbReference type="InterPro" id="IPR002835">
    <property type="entry name" value="CofC"/>
</dbReference>
<dbReference type="InterPro" id="IPR029044">
    <property type="entry name" value="Nucleotide-diphossugar_trans"/>
</dbReference>
<dbReference type="NCBIfam" id="TIGR03552">
    <property type="entry name" value="F420_cofC"/>
    <property type="match status" value="1"/>
</dbReference>
<dbReference type="PANTHER" id="PTHR40392">
    <property type="entry name" value="2-PHOSPHO-L-LACTATE GUANYLYLTRANSFERASE"/>
    <property type="match status" value="1"/>
</dbReference>
<dbReference type="PANTHER" id="PTHR40392:SF1">
    <property type="entry name" value="2-PHOSPHO-L-LACTATE GUANYLYLTRANSFERASE"/>
    <property type="match status" value="1"/>
</dbReference>
<dbReference type="Pfam" id="PF01983">
    <property type="entry name" value="CofC"/>
    <property type="match status" value="1"/>
</dbReference>
<dbReference type="SUPFAM" id="SSF53448">
    <property type="entry name" value="Nucleotide-diphospho-sugar transferases"/>
    <property type="match status" value="1"/>
</dbReference>
<name>FBID_STRCO</name>
<gene>
    <name evidence="1" type="primary">fbiD</name>
    <name type="ordered locus">SCO5557.1</name>
    <name type="ORF">SCO5557a</name>
</gene>
<protein>
    <recommendedName>
        <fullName evidence="1">Phosphoenolpyruvate guanylyltransferase</fullName>
        <shortName evidence="1">PEP guanylyltransferase</shortName>
        <ecNumber evidence="1">2.7.7.105</ecNumber>
    </recommendedName>
</protein>
<accession>Q9ZBS2</accession>